<sequence length="328" mass="35369">MTSTKQHKKVILVGDGAVGSSYAFALVNQGIAQELGIIEIPQLHEKAVGDALDLSHALAFTSPKKIYAAQYSDCADADLVVITAGAPQKPGETRLDLVGKNLAINKSIVTQVVESGFKGIFLVAANPVDVLTYSTWKFSGFPKERVIGSGTSLDSARFRQALAEKLDVDARSVHAYIMGEHGDSEFAVWSHANIAGVNLEEFLKDTQNVQEAELIELFEGVRDAAYTIINKKGATYYGIAVALARITKAILDDENAVLPLSVFQEGQYGVENVFIGQPAVVGAHGIIRPVNIPLNDAETQKMQASAKELQAIIDEAWKNPEFQEASKN</sequence>
<protein>
    <recommendedName>
        <fullName evidence="1">L-lactate dehydrogenase</fullName>
        <shortName evidence="1">L-LDH</shortName>
        <ecNumber evidence="1">1.1.1.27</ecNumber>
    </recommendedName>
</protein>
<keyword id="KW-0021">Allosteric enzyme</keyword>
<keyword id="KW-0963">Cytoplasm</keyword>
<keyword id="KW-0520">NAD</keyword>
<keyword id="KW-0560">Oxidoreductase</keyword>
<keyword id="KW-0597">Phosphoprotein</keyword>
<gene>
    <name evidence="1" type="primary">ldh</name>
    <name type="ordered locus">SP70585_1267</name>
</gene>
<accession>C1C7I6</accession>
<dbReference type="EC" id="1.1.1.27" evidence="1"/>
<dbReference type="EMBL" id="CP000918">
    <property type="protein sequence ID" value="ACO16234.1"/>
    <property type="molecule type" value="Genomic_DNA"/>
</dbReference>
<dbReference type="RefSeq" id="WP_000204725.1">
    <property type="nucleotide sequence ID" value="NC_012468.1"/>
</dbReference>
<dbReference type="SMR" id="C1C7I6"/>
<dbReference type="KEGG" id="snm:SP70585_1267"/>
<dbReference type="HOGENOM" id="CLU_045401_1_1_9"/>
<dbReference type="UniPathway" id="UPA00554">
    <property type="reaction ID" value="UER00611"/>
</dbReference>
<dbReference type="Proteomes" id="UP000002211">
    <property type="component" value="Chromosome"/>
</dbReference>
<dbReference type="GO" id="GO:0005737">
    <property type="term" value="C:cytoplasm"/>
    <property type="evidence" value="ECO:0007669"/>
    <property type="project" value="UniProtKB-SubCell"/>
</dbReference>
<dbReference type="GO" id="GO:0004459">
    <property type="term" value="F:L-lactate dehydrogenase activity"/>
    <property type="evidence" value="ECO:0007669"/>
    <property type="project" value="UniProtKB-UniRule"/>
</dbReference>
<dbReference type="GO" id="GO:0006096">
    <property type="term" value="P:glycolytic process"/>
    <property type="evidence" value="ECO:0007669"/>
    <property type="project" value="UniProtKB-UniRule"/>
</dbReference>
<dbReference type="GO" id="GO:0006089">
    <property type="term" value="P:lactate metabolic process"/>
    <property type="evidence" value="ECO:0007669"/>
    <property type="project" value="TreeGrafter"/>
</dbReference>
<dbReference type="CDD" id="cd05291">
    <property type="entry name" value="HicDH_like"/>
    <property type="match status" value="1"/>
</dbReference>
<dbReference type="FunFam" id="3.40.50.720:FF:000018">
    <property type="entry name" value="Malate dehydrogenase"/>
    <property type="match status" value="1"/>
</dbReference>
<dbReference type="Gene3D" id="3.90.110.10">
    <property type="entry name" value="Lactate dehydrogenase/glycoside hydrolase, family 4, C-terminal"/>
    <property type="match status" value="1"/>
</dbReference>
<dbReference type="Gene3D" id="3.40.50.720">
    <property type="entry name" value="NAD(P)-binding Rossmann-like Domain"/>
    <property type="match status" value="1"/>
</dbReference>
<dbReference type="HAMAP" id="MF_00488">
    <property type="entry name" value="Lactate_dehydrog"/>
    <property type="match status" value="1"/>
</dbReference>
<dbReference type="InterPro" id="IPR001557">
    <property type="entry name" value="L-lactate/malate_DH"/>
</dbReference>
<dbReference type="InterPro" id="IPR011304">
    <property type="entry name" value="L-lactate_DH"/>
</dbReference>
<dbReference type="InterPro" id="IPR018177">
    <property type="entry name" value="L-lactate_DH_AS"/>
</dbReference>
<dbReference type="InterPro" id="IPR022383">
    <property type="entry name" value="Lactate/malate_DH_C"/>
</dbReference>
<dbReference type="InterPro" id="IPR001236">
    <property type="entry name" value="Lactate/malate_DH_N"/>
</dbReference>
<dbReference type="InterPro" id="IPR015955">
    <property type="entry name" value="Lactate_DH/Glyco_Ohase_4_C"/>
</dbReference>
<dbReference type="InterPro" id="IPR036291">
    <property type="entry name" value="NAD(P)-bd_dom_sf"/>
</dbReference>
<dbReference type="NCBIfam" id="TIGR01771">
    <property type="entry name" value="L-LDH-NAD"/>
    <property type="match status" value="1"/>
</dbReference>
<dbReference type="NCBIfam" id="NF000824">
    <property type="entry name" value="PRK00066.1"/>
    <property type="match status" value="1"/>
</dbReference>
<dbReference type="PANTHER" id="PTHR43128">
    <property type="entry name" value="L-2-HYDROXYCARBOXYLATE DEHYDROGENASE (NAD(P)(+))"/>
    <property type="match status" value="1"/>
</dbReference>
<dbReference type="PANTHER" id="PTHR43128:SF16">
    <property type="entry name" value="L-LACTATE DEHYDROGENASE"/>
    <property type="match status" value="1"/>
</dbReference>
<dbReference type="Pfam" id="PF02866">
    <property type="entry name" value="Ldh_1_C"/>
    <property type="match status" value="1"/>
</dbReference>
<dbReference type="Pfam" id="PF00056">
    <property type="entry name" value="Ldh_1_N"/>
    <property type="match status" value="1"/>
</dbReference>
<dbReference type="PIRSF" id="PIRSF000102">
    <property type="entry name" value="Lac_mal_DH"/>
    <property type="match status" value="1"/>
</dbReference>
<dbReference type="PRINTS" id="PR00086">
    <property type="entry name" value="LLDHDRGNASE"/>
</dbReference>
<dbReference type="SUPFAM" id="SSF56327">
    <property type="entry name" value="LDH C-terminal domain-like"/>
    <property type="match status" value="1"/>
</dbReference>
<dbReference type="SUPFAM" id="SSF51735">
    <property type="entry name" value="NAD(P)-binding Rossmann-fold domains"/>
    <property type="match status" value="1"/>
</dbReference>
<dbReference type="PROSITE" id="PS00064">
    <property type="entry name" value="L_LDH"/>
    <property type="match status" value="1"/>
</dbReference>
<evidence type="ECO:0000255" key="1">
    <source>
        <dbReference type="HAMAP-Rule" id="MF_00488"/>
    </source>
</evidence>
<feature type="chain" id="PRO_1000190779" description="L-lactate dehydrogenase">
    <location>
        <begin position="1"/>
        <end position="328"/>
    </location>
</feature>
<feature type="active site" description="Proton acceptor" evidence="1">
    <location>
        <position position="181"/>
    </location>
</feature>
<feature type="binding site" evidence="1">
    <location>
        <position position="18"/>
    </location>
    <ligand>
        <name>NAD(+)</name>
        <dbReference type="ChEBI" id="CHEBI:57540"/>
    </ligand>
</feature>
<feature type="binding site" evidence="1">
    <location>
        <position position="39"/>
    </location>
    <ligand>
        <name>NAD(+)</name>
        <dbReference type="ChEBI" id="CHEBI:57540"/>
    </ligand>
</feature>
<feature type="binding site" evidence="1">
    <location>
        <position position="46"/>
    </location>
    <ligand>
        <name>NAD(+)</name>
        <dbReference type="ChEBI" id="CHEBI:57540"/>
    </ligand>
</feature>
<feature type="binding site" evidence="1">
    <location>
        <position position="71"/>
    </location>
    <ligand>
        <name>NAD(+)</name>
        <dbReference type="ChEBI" id="CHEBI:57540"/>
    </ligand>
</feature>
<feature type="binding site" evidence="1">
    <location>
        <begin position="85"/>
        <end position="86"/>
    </location>
    <ligand>
        <name>NAD(+)</name>
        <dbReference type="ChEBI" id="CHEBI:57540"/>
    </ligand>
</feature>
<feature type="binding site" evidence="1">
    <location>
        <position position="88"/>
    </location>
    <ligand>
        <name>substrate</name>
    </ligand>
</feature>
<feature type="binding site" evidence="1">
    <location>
        <position position="94"/>
    </location>
    <ligand>
        <name>substrate</name>
    </ligand>
</feature>
<feature type="binding site" evidence="1">
    <location>
        <position position="107"/>
    </location>
    <ligand>
        <name>NAD(+)</name>
        <dbReference type="ChEBI" id="CHEBI:57540"/>
    </ligand>
</feature>
<feature type="binding site" evidence="1">
    <location>
        <begin position="124"/>
        <end position="126"/>
    </location>
    <ligand>
        <name>NAD(+)</name>
        <dbReference type="ChEBI" id="CHEBI:57540"/>
    </ligand>
</feature>
<feature type="binding site" evidence="1">
    <location>
        <begin position="126"/>
        <end position="129"/>
    </location>
    <ligand>
        <name>substrate</name>
    </ligand>
</feature>
<feature type="binding site" evidence="1">
    <location>
        <position position="149"/>
    </location>
    <ligand>
        <name>NAD(+)</name>
        <dbReference type="ChEBI" id="CHEBI:57540"/>
    </ligand>
</feature>
<feature type="binding site" evidence="1">
    <location>
        <begin position="154"/>
        <end position="157"/>
    </location>
    <ligand>
        <name>substrate</name>
    </ligand>
</feature>
<feature type="binding site" evidence="1">
    <location>
        <position position="159"/>
    </location>
    <ligand>
        <name>beta-D-fructose 1,6-bisphosphate</name>
        <dbReference type="ChEBI" id="CHEBI:32966"/>
        <note>allosteric activator</note>
    </ligand>
</feature>
<feature type="binding site" evidence="1">
    <location>
        <position position="174"/>
    </location>
    <ligand>
        <name>beta-D-fructose 1,6-bisphosphate</name>
        <dbReference type="ChEBI" id="CHEBI:32966"/>
        <note>allosteric activator</note>
    </ligand>
</feature>
<feature type="binding site" evidence="1">
    <location>
        <position position="235"/>
    </location>
    <ligand>
        <name>substrate</name>
    </ligand>
</feature>
<feature type="modified residue" description="Phosphotyrosine" evidence="1">
    <location>
        <position position="226"/>
    </location>
</feature>
<reference key="1">
    <citation type="journal article" date="2010" name="Genome Biol.">
        <title>Structure and dynamics of the pan-genome of Streptococcus pneumoniae and closely related species.</title>
        <authorList>
            <person name="Donati C."/>
            <person name="Hiller N.L."/>
            <person name="Tettelin H."/>
            <person name="Muzzi A."/>
            <person name="Croucher N.J."/>
            <person name="Angiuoli S.V."/>
            <person name="Oggioni M."/>
            <person name="Dunning Hotopp J.C."/>
            <person name="Hu F.Z."/>
            <person name="Riley D.R."/>
            <person name="Covacci A."/>
            <person name="Mitchell T.J."/>
            <person name="Bentley S.D."/>
            <person name="Kilian M."/>
            <person name="Ehrlich G.D."/>
            <person name="Rappuoli R."/>
            <person name="Moxon E.R."/>
            <person name="Masignani V."/>
        </authorList>
    </citation>
    <scope>NUCLEOTIDE SEQUENCE [LARGE SCALE GENOMIC DNA]</scope>
    <source>
        <strain>70585</strain>
    </source>
</reference>
<proteinExistence type="inferred from homology"/>
<organism>
    <name type="scientific">Streptococcus pneumoniae (strain 70585)</name>
    <dbReference type="NCBI Taxonomy" id="488221"/>
    <lineage>
        <taxon>Bacteria</taxon>
        <taxon>Bacillati</taxon>
        <taxon>Bacillota</taxon>
        <taxon>Bacilli</taxon>
        <taxon>Lactobacillales</taxon>
        <taxon>Streptococcaceae</taxon>
        <taxon>Streptococcus</taxon>
    </lineage>
</organism>
<comment type="function">
    <text evidence="1">Catalyzes the conversion of lactate to pyruvate.</text>
</comment>
<comment type="catalytic activity">
    <reaction evidence="1">
        <text>(S)-lactate + NAD(+) = pyruvate + NADH + H(+)</text>
        <dbReference type="Rhea" id="RHEA:23444"/>
        <dbReference type="ChEBI" id="CHEBI:15361"/>
        <dbReference type="ChEBI" id="CHEBI:15378"/>
        <dbReference type="ChEBI" id="CHEBI:16651"/>
        <dbReference type="ChEBI" id="CHEBI:57540"/>
        <dbReference type="ChEBI" id="CHEBI:57945"/>
        <dbReference type="EC" id="1.1.1.27"/>
    </reaction>
</comment>
<comment type="activity regulation">
    <text evidence="1">Allosterically activated by fructose 1,6-bisphosphate (FBP).</text>
</comment>
<comment type="pathway">
    <text evidence="1">Fermentation; pyruvate fermentation to lactate; (S)-lactate from pyruvate: step 1/1.</text>
</comment>
<comment type="subunit">
    <text evidence="1">Homotetramer.</text>
</comment>
<comment type="subcellular location">
    <subcellularLocation>
        <location evidence="1">Cytoplasm</location>
    </subcellularLocation>
</comment>
<comment type="similarity">
    <text evidence="1">Belongs to the LDH/MDH superfamily. LDH family.</text>
</comment>
<name>LDH_STRP7</name>